<reference key="1">
    <citation type="journal article" date="1987" name="Biol. Chem. Hoppe-Seyler">
        <title>Structure and function of L-lactate dehydrogenases from thermophilic and mesophilic bacteria. VII. Nucleotide sequence of the lactate dehydrogenase gene from the mesophilic bacterium Bacillus megaterium. Preparation and properties of a hybrid lactate dehydrogenase comprising moieties of the B. megaterium and B. stearothermophilus enzymes.</title>
        <authorList>
            <person name="Waldvogel S."/>
            <person name="Weber H."/>
            <person name="Zuber H."/>
        </authorList>
    </citation>
    <scope>NUCLEOTIDE SEQUENCE [GENOMIC DNA]</scope>
    <source>
        <strain>DSM 090</strain>
    </source>
</reference>
<reference key="2">
    <citation type="journal article" date="1987" name="Biol. Chem. Hoppe-Seyler">
        <title>Structure and function of L-lactate dehydrogenases from thermophilic and mesophilic bacteria, V. The complete amino-acid sequence of the mesophilic L-lactate dehydrogenase from Bacillus megaterium.</title>
        <authorList>
            <person name="Stangl D."/>
            <person name="Wiederkehr F."/>
            <person name="Suter F."/>
            <person name="Zuber H."/>
        </authorList>
    </citation>
    <scope>PROTEIN SEQUENCE</scope>
</reference>
<reference key="3">
    <citation type="thesis" date="1982" institute="ETH Zurich" country="Switzerland">
        <authorList>
            <person name="Widerkehr F."/>
        </authorList>
    </citation>
    <scope>PRELIMINARY PROTEIN SEQUENCE</scope>
</reference>
<gene>
    <name evidence="1" type="primary">ldh</name>
</gene>
<organism>
    <name type="scientific">Priestia megaterium</name>
    <name type="common">Bacillus megaterium</name>
    <dbReference type="NCBI Taxonomy" id="1404"/>
    <lineage>
        <taxon>Bacteria</taxon>
        <taxon>Bacillati</taxon>
        <taxon>Bacillota</taxon>
        <taxon>Bacilli</taxon>
        <taxon>Bacillales</taxon>
        <taxon>Bacillaceae</taxon>
        <taxon>Priestia</taxon>
    </lineage>
</organism>
<comment type="function">
    <text evidence="1">Catalyzes the conversion of lactate to pyruvate.</text>
</comment>
<comment type="catalytic activity">
    <reaction evidence="1">
        <text>(S)-lactate + NAD(+) = pyruvate + NADH + H(+)</text>
        <dbReference type="Rhea" id="RHEA:23444"/>
        <dbReference type="ChEBI" id="CHEBI:15361"/>
        <dbReference type="ChEBI" id="CHEBI:15378"/>
        <dbReference type="ChEBI" id="CHEBI:16651"/>
        <dbReference type="ChEBI" id="CHEBI:57540"/>
        <dbReference type="ChEBI" id="CHEBI:57945"/>
        <dbReference type="EC" id="1.1.1.27"/>
    </reaction>
</comment>
<comment type="activity regulation">
    <text evidence="1">Allosterically activated by fructose 1,6-bisphosphate (FBP).</text>
</comment>
<comment type="pathway">
    <text evidence="1">Fermentation; pyruvate fermentation to lactate; (S)-lactate from pyruvate: step 1/1.</text>
</comment>
<comment type="subunit">
    <text evidence="1">Homotetramer.</text>
</comment>
<comment type="subcellular location">
    <subcellularLocation>
        <location evidence="1">Cytoplasm</location>
    </subcellularLocation>
</comment>
<comment type="similarity">
    <text evidence="1 2">Belongs to the LDH/MDH superfamily. LDH family.</text>
</comment>
<protein>
    <recommendedName>
        <fullName evidence="1">L-lactate dehydrogenase</fullName>
        <shortName evidence="1">L-LDH</shortName>
        <ecNumber evidence="1">1.1.1.27</ecNumber>
    </recommendedName>
</protein>
<dbReference type="EC" id="1.1.1.27" evidence="1"/>
<dbReference type="EMBL" id="M22305">
    <property type="protein sequence ID" value="AAA22566.1"/>
    <property type="molecule type" value="Genomic_DNA"/>
</dbReference>
<dbReference type="PIR" id="S00133">
    <property type="entry name" value="DEBSLM"/>
</dbReference>
<dbReference type="RefSeq" id="WP_057274969.1">
    <property type="nucleotide sequence ID" value="NZ_JACYVS010000007.1"/>
</dbReference>
<dbReference type="SMR" id="P00345"/>
<dbReference type="BRENDA" id="1.1.1.27">
    <property type="organism ID" value="656"/>
</dbReference>
<dbReference type="UniPathway" id="UPA00554">
    <property type="reaction ID" value="UER00611"/>
</dbReference>
<dbReference type="GO" id="GO:0005737">
    <property type="term" value="C:cytoplasm"/>
    <property type="evidence" value="ECO:0007669"/>
    <property type="project" value="UniProtKB-SubCell"/>
</dbReference>
<dbReference type="GO" id="GO:0004459">
    <property type="term" value="F:L-lactate dehydrogenase activity"/>
    <property type="evidence" value="ECO:0007669"/>
    <property type="project" value="UniProtKB-UniRule"/>
</dbReference>
<dbReference type="GO" id="GO:0006096">
    <property type="term" value="P:glycolytic process"/>
    <property type="evidence" value="ECO:0007669"/>
    <property type="project" value="UniProtKB-UniRule"/>
</dbReference>
<dbReference type="GO" id="GO:0006089">
    <property type="term" value="P:lactate metabolic process"/>
    <property type="evidence" value="ECO:0007669"/>
    <property type="project" value="TreeGrafter"/>
</dbReference>
<dbReference type="CDD" id="cd05291">
    <property type="entry name" value="HicDH_like"/>
    <property type="match status" value="1"/>
</dbReference>
<dbReference type="FunFam" id="3.40.50.720:FF:000018">
    <property type="entry name" value="Malate dehydrogenase"/>
    <property type="match status" value="1"/>
</dbReference>
<dbReference type="Gene3D" id="3.90.110.10">
    <property type="entry name" value="Lactate dehydrogenase/glycoside hydrolase, family 4, C-terminal"/>
    <property type="match status" value="1"/>
</dbReference>
<dbReference type="Gene3D" id="3.40.50.720">
    <property type="entry name" value="NAD(P)-binding Rossmann-like Domain"/>
    <property type="match status" value="1"/>
</dbReference>
<dbReference type="HAMAP" id="MF_00488">
    <property type="entry name" value="Lactate_dehydrog"/>
    <property type="match status" value="1"/>
</dbReference>
<dbReference type="InterPro" id="IPR001557">
    <property type="entry name" value="L-lactate/malate_DH"/>
</dbReference>
<dbReference type="InterPro" id="IPR011304">
    <property type="entry name" value="L-lactate_DH"/>
</dbReference>
<dbReference type="InterPro" id="IPR018177">
    <property type="entry name" value="L-lactate_DH_AS"/>
</dbReference>
<dbReference type="InterPro" id="IPR022383">
    <property type="entry name" value="Lactate/malate_DH_C"/>
</dbReference>
<dbReference type="InterPro" id="IPR001236">
    <property type="entry name" value="Lactate/malate_DH_N"/>
</dbReference>
<dbReference type="InterPro" id="IPR015955">
    <property type="entry name" value="Lactate_DH/Glyco_Ohase_4_C"/>
</dbReference>
<dbReference type="InterPro" id="IPR036291">
    <property type="entry name" value="NAD(P)-bd_dom_sf"/>
</dbReference>
<dbReference type="NCBIfam" id="TIGR01771">
    <property type="entry name" value="L-LDH-NAD"/>
    <property type="match status" value="1"/>
</dbReference>
<dbReference type="NCBIfam" id="NF000824">
    <property type="entry name" value="PRK00066.1"/>
    <property type="match status" value="1"/>
</dbReference>
<dbReference type="NCBIfam" id="NF004863">
    <property type="entry name" value="PRK06223.1"/>
    <property type="match status" value="1"/>
</dbReference>
<dbReference type="PANTHER" id="PTHR43128">
    <property type="entry name" value="L-2-HYDROXYCARBOXYLATE DEHYDROGENASE (NAD(P)(+))"/>
    <property type="match status" value="1"/>
</dbReference>
<dbReference type="PANTHER" id="PTHR43128:SF16">
    <property type="entry name" value="L-LACTATE DEHYDROGENASE"/>
    <property type="match status" value="1"/>
</dbReference>
<dbReference type="Pfam" id="PF02866">
    <property type="entry name" value="Ldh_1_C"/>
    <property type="match status" value="1"/>
</dbReference>
<dbReference type="Pfam" id="PF00056">
    <property type="entry name" value="Ldh_1_N"/>
    <property type="match status" value="1"/>
</dbReference>
<dbReference type="PIRSF" id="PIRSF000102">
    <property type="entry name" value="Lac_mal_DH"/>
    <property type="match status" value="1"/>
</dbReference>
<dbReference type="PRINTS" id="PR00086">
    <property type="entry name" value="LLDHDRGNASE"/>
</dbReference>
<dbReference type="SUPFAM" id="SSF56327">
    <property type="entry name" value="LDH C-terminal domain-like"/>
    <property type="match status" value="1"/>
</dbReference>
<dbReference type="SUPFAM" id="SSF51735">
    <property type="entry name" value="NAD(P)-binding Rossmann-fold domains"/>
    <property type="match status" value="1"/>
</dbReference>
<dbReference type="PROSITE" id="PS00064">
    <property type="entry name" value="L_LDH"/>
    <property type="match status" value="1"/>
</dbReference>
<feature type="chain" id="PRO_0000168325" description="L-lactate dehydrogenase">
    <location>
        <begin position="1"/>
        <end position="318"/>
    </location>
</feature>
<feature type="active site" description="Proton acceptor" evidence="1">
    <location>
        <position position="181"/>
    </location>
</feature>
<feature type="binding site" evidence="1">
    <location>
        <position position="20"/>
    </location>
    <ligand>
        <name>NAD(+)</name>
        <dbReference type="ChEBI" id="CHEBI:57540"/>
    </ligand>
</feature>
<feature type="binding site" evidence="1">
    <location>
        <position position="41"/>
    </location>
    <ligand>
        <name>NAD(+)</name>
        <dbReference type="ChEBI" id="CHEBI:57540"/>
    </ligand>
</feature>
<feature type="binding site" evidence="1">
    <location>
        <position position="46"/>
    </location>
    <ligand>
        <name>NAD(+)</name>
        <dbReference type="ChEBI" id="CHEBI:57540"/>
    </ligand>
</feature>
<feature type="binding site" evidence="1">
    <location>
        <position position="71"/>
    </location>
    <ligand>
        <name>NAD(+)</name>
        <dbReference type="ChEBI" id="CHEBI:57540"/>
    </ligand>
</feature>
<feature type="binding site" evidence="1">
    <location>
        <begin position="85"/>
        <end position="86"/>
    </location>
    <ligand>
        <name>NAD(+)</name>
        <dbReference type="ChEBI" id="CHEBI:57540"/>
    </ligand>
</feature>
<feature type="binding site" evidence="1">
    <location>
        <position position="88"/>
    </location>
    <ligand>
        <name>substrate</name>
    </ligand>
</feature>
<feature type="binding site" evidence="1">
    <location>
        <position position="94"/>
    </location>
    <ligand>
        <name>substrate</name>
    </ligand>
</feature>
<feature type="binding site" evidence="1">
    <location>
        <begin position="124"/>
        <end position="126"/>
    </location>
    <ligand>
        <name>NAD(+)</name>
        <dbReference type="ChEBI" id="CHEBI:57540"/>
    </ligand>
</feature>
<feature type="binding site" evidence="1">
    <location>
        <begin position="126"/>
        <end position="129"/>
    </location>
    <ligand>
        <name>substrate</name>
    </ligand>
</feature>
<feature type="binding site" evidence="1">
    <location>
        <position position="149"/>
    </location>
    <ligand>
        <name>NAD(+)</name>
        <dbReference type="ChEBI" id="CHEBI:57540"/>
    </ligand>
</feature>
<feature type="binding site" evidence="1">
    <location>
        <begin position="154"/>
        <end position="157"/>
    </location>
    <ligand>
        <name>substrate</name>
    </ligand>
</feature>
<feature type="binding site" evidence="1">
    <location>
        <position position="159"/>
    </location>
    <ligand>
        <name>beta-D-fructose 1,6-bisphosphate</name>
        <dbReference type="ChEBI" id="CHEBI:32966"/>
        <note>allosteric activator</note>
    </ligand>
</feature>
<feature type="binding site" evidence="1">
    <location>
        <position position="174"/>
    </location>
    <ligand>
        <name>beta-D-fructose 1,6-bisphosphate</name>
        <dbReference type="ChEBI" id="CHEBI:32966"/>
        <note>allosteric activator</note>
    </ligand>
</feature>
<feature type="binding site" evidence="1">
    <location>
        <position position="235"/>
    </location>
    <ligand>
        <name>substrate</name>
    </ligand>
</feature>
<feature type="modified residue" description="Phosphotyrosine" evidence="1">
    <location>
        <position position="226"/>
    </location>
</feature>
<name>LDH_PRIMG</name>
<proteinExistence type="evidence at protein level"/>
<sequence>MKTQFTPKTRKVAVIGTGFVGSSYAFSMVNQGIANELVLIDMNKEKAEGEARDINHGMPFATPMKIWAGDYKDCADADLAVITAGANQAPGETRLDLVEKNVKIFECIVKDIMNSGFDGIILVATNPVDILAHVTQKVSGLPNGRVIGSGTILDTARFRYLLSDYFEVDSRNVHAYIMGEHGDTEFPVWSHAQIGGVKLEHFINTAAIEKEPDMQHLFEQTRDAAYHIINRKGATYYGIAMGLVRITKAILDDENSILTVSALLEGQYGISDVYIGVPAIINKNGVRQIIELNLTPHEQQQLEHSASILKQTRDRAFV</sequence>
<accession>P00345</accession>
<keyword id="KW-0021">Allosteric enzyme</keyword>
<keyword id="KW-0963">Cytoplasm</keyword>
<keyword id="KW-0903">Direct protein sequencing</keyword>
<keyword id="KW-0520">NAD</keyword>
<keyword id="KW-0560">Oxidoreductase</keyword>
<keyword id="KW-0597">Phosphoprotein</keyword>
<evidence type="ECO:0000255" key="1">
    <source>
        <dbReference type="HAMAP-Rule" id="MF_00488"/>
    </source>
</evidence>
<evidence type="ECO:0000305" key="2"/>